<protein>
    <recommendedName>
        <fullName evidence="1">Cell division topological specificity factor</fullName>
    </recommendedName>
</protein>
<proteinExistence type="inferred from homology"/>
<reference key="1">
    <citation type="journal article" date="2010" name="Genome Biol. Evol.">
        <title>Continuing evolution of Burkholderia mallei through genome reduction and large-scale rearrangements.</title>
        <authorList>
            <person name="Losada L."/>
            <person name="Ronning C.M."/>
            <person name="DeShazer D."/>
            <person name="Woods D."/>
            <person name="Fedorova N."/>
            <person name="Kim H.S."/>
            <person name="Shabalina S.A."/>
            <person name="Pearson T.R."/>
            <person name="Brinkac L."/>
            <person name="Tan P."/>
            <person name="Nandi T."/>
            <person name="Crabtree J."/>
            <person name="Badger J."/>
            <person name="Beckstrom-Sternberg S."/>
            <person name="Saqib M."/>
            <person name="Schutzer S.E."/>
            <person name="Keim P."/>
            <person name="Nierman W.C."/>
        </authorList>
    </citation>
    <scope>NUCLEOTIDE SEQUENCE [LARGE SCALE GENOMIC DNA]</scope>
    <source>
        <strain>NCTC 10229</strain>
    </source>
</reference>
<feature type="chain" id="PRO_1000047775" description="Cell division topological specificity factor">
    <location>
        <begin position="1"/>
        <end position="84"/>
    </location>
</feature>
<accession>A2S9H0</accession>
<name>MINE_BURM9</name>
<organism>
    <name type="scientific">Burkholderia mallei (strain NCTC 10229)</name>
    <dbReference type="NCBI Taxonomy" id="412022"/>
    <lineage>
        <taxon>Bacteria</taxon>
        <taxon>Pseudomonadati</taxon>
        <taxon>Pseudomonadota</taxon>
        <taxon>Betaproteobacteria</taxon>
        <taxon>Burkholderiales</taxon>
        <taxon>Burkholderiaceae</taxon>
        <taxon>Burkholderia</taxon>
        <taxon>pseudomallei group</taxon>
    </lineage>
</organism>
<gene>
    <name evidence="1" type="primary">minE</name>
    <name type="ordered locus">BMA10229_A2633</name>
</gene>
<evidence type="ECO:0000255" key="1">
    <source>
        <dbReference type="HAMAP-Rule" id="MF_00262"/>
    </source>
</evidence>
<sequence length="84" mass="9395">MSILSFLLGEKKKSAAVAKERLQLIIAHERVGGRPPADYLPALQKELVAVISKYVKISNDDIRVSLERQDDLEVLEVKIEIPQA</sequence>
<comment type="function">
    <text evidence="1">Prevents the cell division inhibition by proteins MinC and MinD at internal division sites while permitting inhibition at polar sites. This ensures cell division at the proper site by restricting the formation of a division septum at the midpoint of the long axis of the cell.</text>
</comment>
<comment type="similarity">
    <text evidence="1">Belongs to the MinE family.</text>
</comment>
<keyword id="KW-0131">Cell cycle</keyword>
<keyword id="KW-0132">Cell division</keyword>
<dbReference type="EMBL" id="CP000546">
    <property type="protein sequence ID" value="ABN03603.1"/>
    <property type="molecule type" value="Genomic_DNA"/>
</dbReference>
<dbReference type="RefSeq" id="WP_004186076.1">
    <property type="nucleotide sequence ID" value="NC_008836.1"/>
</dbReference>
<dbReference type="SMR" id="A2S9H0"/>
<dbReference type="GeneID" id="93061170"/>
<dbReference type="KEGG" id="bml:BMA10229_A2633"/>
<dbReference type="HOGENOM" id="CLU_137929_2_1_4"/>
<dbReference type="Proteomes" id="UP000002283">
    <property type="component" value="Chromosome I"/>
</dbReference>
<dbReference type="GO" id="GO:0051301">
    <property type="term" value="P:cell division"/>
    <property type="evidence" value="ECO:0007669"/>
    <property type="project" value="UniProtKB-KW"/>
</dbReference>
<dbReference type="GO" id="GO:0032955">
    <property type="term" value="P:regulation of division septum assembly"/>
    <property type="evidence" value="ECO:0007669"/>
    <property type="project" value="InterPro"/>
</dbReference>
<dbReference type="FunFam" id="3.30.1070.10:FF:000001">
    <property type="entry name" value="Cell division topological specificity factor"/>
    <property type="match status" value="1"/>
</dbReference>
<dbReference type="Gene3D" id="3.30.1070.10">
    <property type="entry name" value="Cell division topological specificity factor MinE"/>
    <property type="match status" value="1"/>
</dbReference>
<dbReference type="HAMAP" id="MF_00262">
    <property type="entry name" value="MinE"/>
    <property type="match status" value="1"/>
</dbReference>
<dbReference type="InterPro" id="IPR005527">
    <property type="entry name" value="MinE"/>
</dbReference>
<dbReference type="InterPro" id="IPR036707">
    <property type="entry name" value="MinE_sf"/>
</dbReference>
<dbReference type="NCBIfam" id="TIGR01215">
    <property type="entry name" value="minE"/>
    <property type="match status" value="1"/>
</dbReference>
<dbReference type="NCBIfam" id="NF001422">
    <property type="entry name" value="PRK00296.1"/>
    <property type="match status" value="1"/>
</dbReference>
<dbReference type="NCBIfam" id="NF010595">
    <property type="entry name" value="PRK13989.1"/>
    <property type="match status" value="1"/>
</dbReference>
<dbReference type="Pfam" id="PF03776">
    <property type="entry name" value="MinE"/>
    <property type="match status" value="1"/>
</dbReference>
<dbReference type="SUPFAM" id="SSF55229">
    <property type="entry name" value="Cell division protein MinE topological specificity domain"/>
    <property type="match status" value="1"/>
</dbReference>